<organism>
    <name type="scientific">Sorangium cellulosum (strain So ce56)</name>
    <name type="common">Polyangium cellulosum (strain So ce56)</name>
    <dbReference type="NCBI Taxonomy" id="448385"/>
    <lineage>
        <taxon>Bacteria</taxon>
        <taxon>Pseudomonadati</taxon>
        <taxon>Myxococcota</taxon>
        <taxon>Polyangia</taxon>
        <taxon>Polyangiales</taxon>
        <taxon>Polyangiaceae</taxon>
        <taxon>Sorangium</taxon>
    </lineage>
</organism>
<dbReference type="EC" id="3.4.21.53" evidence="1"/>
<dbReference type="EMBL" id="AM746676">
    <property type="protein sequence ID" value="CAN94667.1"/>
    <property type="molecule type" value="Genomic_DNA"/>
</dbReference>
<dbReference type="RefSeq" id="WP_012237136.1">
    <property type="nucleotide sequence ID" value="NC_010162.1"/>
</dbReference>
<dbReference type="SMR" id="A9F8L0"/>
<dbReference type="STRING" id="448385.sce4504"/>
<dbReference type="KEGG" id="scl:sce4504"/>
<dbReference type="eggNOG" id="COG0466">
    <property type="taxonomic scope" value="Bacteria"/>
</dbReference>
<dbReference type="HOGENOM" id="CLU_004109_4_3_7"/>
<dbReference type="OrthoDB" id="5477751at2"/>
<dbReference type="BioCyc" id="SCEL448385:SCE_RS23120-MONOMER"/>
<dbReference type="Proteomes" id="UP000002139">
    <property type="component" value="Chromosome"/>
</dbReference>
<dbReference type="GO" id="GO:0005737">
    <property type="term" value="C:cytoplasm"/>
    <property type="evidence" value="ECO:0007669"/>
    <property type="project" value="UniProtKB-SubCell"/>
</dbReference>
<dbReference type="GO" id="GO:0005524">
    <property type="term" value="F:ATP binding"/>
    <property type="evidence" value="ECO:0007669"/>
    <property type="project" value="UniProtKB-UniRule"/>
</dbReference>
<dbReference type="GO" id="GO:0016887">
    <property type="term" value="F:ATP hydrolysis activity"/>
    <property type="evidence" value="ECO:0007669"/>
    <property type="project" value="UniProtKB-UniRule"/>
</dbReference>
<dbReference type="GO" id="GO:0004176">
    <property type="term" value="F:ATP-dependent peptidase activity"/>
    <property type="evidence" value="ECO:0007669"/>
    <property type="project" value="UniProtKB-UniRule"/>
</dbReference>
<dbReference type="GO" id="GO:0043565">
    <property type="term" value="F:sequence-specific DNA binding"/>
    <property type="evidence" value="ECO:0007669"/>
    <property type="project" value="UniProtKB-UniRule"/>
</dbReference>
<dbReference type="GO" id="GO:0004252">
    <property type="term" value="F:serine-type endopeptidase activity"/>
    <property type="evidence" value="ECO:0007669"/>
    <property type="project" value="UniProtKB-UniRule"/>
</dbReference>
<dbReference type="GO" id="GO:0034605">
    <property type="term" value="P:cellular response to heat"/>
    <property type="evidence" value="ECO:0007669"/>
    <property type="project" value="UniProtKB-UniRule"/>
</dbReference>
<dbReference type="GO" id="GO:0006515">
    <property type="term" value="P:protein quality control for misfolded or incompletely synthesized proteins"/>
    <property type="evidence" value="ECO:0007669"/>
    <property type="project" value="UniProtKB-UniRule"/>
</dbReference>
<dbReference type="CDD" id="cd19500">
    <property type="entry name" value="RecA-like_Lon"/>
    <property type="match status" value="1"/>
</dbReference>
<dbReference type="FunFam" id="1.20.5.5270:FF:000002">
    <property type="entry name" value="Lon protease homolog"/>
    <property type="match status" value="1"/>
</dbReference>
<dbReference type="FunFam" id="3.40.50.300:FF:000021">
    <property type="entry name" value="Lon protease homolog"/>
    <property type="match status" value="1"/>
</dbReference>
<dbReference type="FunFam" id="3.30.230.10:FF:000019">
    <property type="entry name" value="Lon protease homolog 2, peroxisomal"/>
    <property type="match status" value="1"/>
</dbReference>
<dbReference type="Gene3D" id="1.10.8.60">
    <property type="match status" value="1"/>
</dbReference>
<dbReference type="Gene3D" id="1.20.5.5270">
    <property type="match status" value="1"/>
</dbReference>
<dbReference type="Gene3D" id="1.20.58.1480">
    <property type="match status" value="1"/>
</dbReference>
<dbReference type="Gene3D" id="3.30.230.10">
    <property type="match status" value="1"/>
</dbReference>
<dbReference type="Gene3D" id="2.30.130.40">
    <property type="entry name" value="LON domain-like"/>
    <property type="match status" value="1"/>
</dbReference>
<dbReference type="Gene3D" id="3.40.50.300">
    <property type="entry name" value="P-loop containing nucleotide triphosphate hydrolases"/>
    <property type="match status" value="1"/>
</dbReference>
<dbReference type="HAMAP" id="MF_01973">
    <property type="entry name" value="lon_bact"/>
    <property type="match status" value="1"/>
</dbReference>
<dbReference type="InterPro" id="IPR003593">
    <property type="entry name" value="AAA+_ATPase"/>
</dbReference>
<dbReference type="InterPro" id="IPR003959">
    <property type="entry name" value="ATPase_AAA_core"/>
</dbReference>
<dbReference type="InterPro" id="IPR027543">
    <property type="entry name" value="Lon_bac"/>
</dbReference>
<dbReference type="InterPro" id="IPR004815">
    <property type="entry name" value="Lon_bac/euk-typ"/>
</dbReference>
<dbReference type="InterPro" id="IPR054594">
    <property type="entry name" value="Lon_lid"/>
</dbReference>
<dbReference type="InterPro" id="IPR008269">
    <property type="entry name" value="Lon_proteolytic"/>
</dbReference>
<dbReference type="InterPro" id="IPR027065">
    <property type="entry name" value="Lon_Prtase"/>
</dbReference>
<dbReference type="InterPro" id="IPR003111">
    <property type="entry name" value="Lon_prtase_N"/>
</dbReference>
<dbReference type="InterPro" id="IPR046336">
    <property type="entry name" value="Lon_prtase_N_sf"/>
</dbReference>
<dbReference type="InterPro" id="IPR027417">
    <property type="entry name" value="P-loop_NTPase"/>
</dbReference>
<dbReference type="InterPro" id="IPR008268">
    <property type="entry name" value="Peptidase_S16_AS"/>
</dbReference>
<dbReference type="InterPro" id="IPR015947">
    <property type="entry name" value="PUA-like_sf"/>
</dbReference>
<dbReference type="InterPro" id="IPR020568">
    <property type="entry name" value="Ribosomal_Su5_D2-typ_SF"/>
</dbReference>
<dbReference type="InterPro" id="IPR014721">
    <property type="entry name" value="Ribsml_uS5_D2-typ_fold_subgr"/>
</dbReference>
<dbReference type="NCBIfam" id="TIGR00763">
    <property type="entry name" value="lon"/>
    <property type="match status" value="1"/>
</dbReference>
<dbReference type="PANTHER" id="PTHR10046">
    <property type="entry name" value="ATP DEPENDENT LON PROTEASE FAMILY MEMBER"/>
    <property type="match status" value="1"/>
</dbReference>
<dbReference type="Pfam" id="PF00004">
    <property type="entry name" value="AAA"/>
    <property type="match status" value="1"/>
</dbReference>
<dbReference type="Pfam" id="PF05362">
    <property type="entry name" value="Lon_C"/>
    <property type="match status" value="1"/>
</dbReference>
<dbReference type="Pfam" id="PF22667">
    <property type="entry name" value="Lon_lid"/>
    <property type="match status" value="1"/>
</dbReference>
<dbReference type="Pfam" id="PF02190">
    <property type="entry name" value="LON_substr_bdg"/>
    <property type="match status" value="1"/>
</dbReference>
<dbReference type="PIRSF" id="PIRSF001174">
    <property type="entry name" value="Lon_proteas"/>
    <property type="match status" value="1"/>
</dbReference>
<dbReference type="PRINTS" id="PR00830">
    <property type="entry name" value="ENDOLAPTASE"/>
</dbReference>
<dbReference type="SMART" id="SM00382">
    <property type="entry name" value="AAA"/>
    <property type="match status" value="1"/>
</dbReference>
<dbReference type="SMART" id="SM00464">
    <property type="entry name" value="LON"/>
    <property type="match status" value="1"/>
</dbReference>
<dbReference type="SUPFAM" id="SSF52540">
    <property type="entry name" value="P-loop containing nucleoside triphosphate hydrolases"/>
    <property type="match status" value="1"/>
</dbReference>
<dbReference type="SUPFAM" id="SSF88697">
    <property type="entry name" value="PUA domain-like"/>
    <property type="match status" value="1"/>
</dbReference>
<dbReference type="SUPFAM" id="SSF54211">
    <property type="entry name" value="Ribosomal protein S5 domain 2-like"/>
    <property type="match status" value="1"/>
</dbReference>
<dbReference type="PROSITE" id="PS51787">
    <property type="entry name" value="LON_N"/>
    <property type="match status" value="1"/>
</dbReference>
<dbReference type="PROSITE" id="PS51786">
    <property type="entry name" value="LON_PROTEOLYTIC"/>
    <property type="match status" value="1"/>
</dbReference>
<dbReference type="PROSITE" id="PS01046">
    <property type="entry name" value="LON_SER"/>
    <property type="match status" value="1"/>
</dbReference>
<sequence length="799" mass="85866">MSQLRSGASAPRSPFPLLPLRTGVLFPGTVLTLPVGRPRSVALLNAVHAGDVIGVIAQRDPKREDPRREDLHDIGTFARVVDISRVSNGYRLVIEGLDRFALSALVETEPTWRAEGTLAPEFLGDAEEARLLAASLRERAREVGPKTGTNLAEIAATSRAEPGVFADQVAGALGLPTEKEMEVLSELRVVPRLQRVAGLLAEASALADLKKKIDGDVRRELGKGQREVILREQLRAIQKELAGGEEGEDELSALRRRLDEAGLPEEARAVADRELRRLESVGPQSAEHNVIRTYLEWIADLPWSARAEVKDDLDAVKAKLDEEHRGLDDVKRRILEHMAVLKLTGKARATILCFAGPPGVGKTSLGQSIADATGRPFVRISLGGVHDEAELRGHRRTYVGALPGRIVHALKKAKVKNPIVLLDEVDKLGAGWRGSPEAALLEVLDPEQNRTFVDHYLELPFDLSEVVFLCTVNDLGALSAPLRDRLEVIELSGYTPDEKIAIARSHLVPKQLKEHAIDPGSLSITDEALAAIVRDYTREAGVRQLGREIKKLCRAVALEIARAADGKAPRVVVEASDLGTYLGKVRFFSDVAERTSVAGVATGLAWTPVGGDILFIETSRMPGKGRVEITGQLGDVMKESAKAALTYVRSHAIELGVDTAKLEAEDLHIHVPAGGVPKDGPSAGVTMFTALTSLLSARRVRSDTAMTGECTLRGRVLPVGGIKSKVLAAHRAGIKRVVLPQKNARDAEEIPKEVRAELELIFVEDMSQVIAAALEEAPIEAAGTGGVTGAAAGEPAAAA</sequence>
<reference key="1">
    <citation type="journal article" date="2007" name="Nat. Biotechnol.">
        <title>Complete genome sequence of the myxobacterium Sorangium cellulosum.</title>
        <authorList>
            <person name="Schneiker S."/>
            <person name="Perlova O."/>
            <person name="Kaiser O."/>
            <person name="Gerth K."/>
            <person name="Alici A."/>
            <person name="Altmeyer M.O."/>
            <person name="Bartels D."/>
            <person name="Bekel T."/>
            <person name="Beyer S."/>
            <person name="Bode E."/>
            <person name="Bode H.B."/>
            <person name="Bolten C.J."/>
            <person name="Choudhuri J.V."/>
            <person name="Doss S."/>
            <person name="Elnakady Y.A."/>
            <person name="Frank B."/>
            <person name="Gaigalat L."/>
            <person name="Goesmann A."/>
            <person name="Groeger C."/>
            <person name="Gross F."/>
            <person name="Jelsbak L."/>
            <person name="Jelsbak L."/>
            <person name="Kalinowski J."/>
            <person name="Kegler C."/>
            <person name="Knauber T."/>
            <person name="Konietzny S."/>
            <person name="Kopp M."/>
            <person name="Krause L."/>
            <person name="Krug D."/>
            <person name="Linke B."/>
            <person name="Mahmud T."/>
            <person name="Martinez-Arias R."/>
            <person name="McHardy A.C."/>
            <person name="Merai M."/>
            <person name="Meyer F."/>
            <person name="Mormann S."/>
            <person name="Munoz-Dorado J."/>
            <person name="Perez J."/>
            <person name="Pradella S."/>
            <person name="Rachid S."/>
            <person name="Raddatz G."/>
            <person name="Rosenau F."/>
            <person name="Rueckert C."/>
            <person name="Sasse F."/>
            <person name="Scharfe M."/>
            <person name="Schuster S.C."/>
            <person name="Suen G."/>
            <person name="Treuner-Lange A."/>
            <person name="Velicer G.J."/>
            <person name="Vorholter F.-J."/>
            <person name="Weissman K.J."/>
            <person name="Welch R.D."/>
            <person name="Wenzel S.C."/>
            <person name="Whitworth D.E."/>
            <person name="Wilhelm S."/>
            <person name="Wittmann C."/>
            <person name="Bloecker H."/>
            <person name="Puehler A."/>
            <person name="Mueller R."/>
        </authorList>
    </citation>
    <scope>NUCLEOTIDE SEQUENCE [LARGE SCALE GENOMIC DNA]</scope>
    <source>
        <strain>So ce56</strain>
    </source>
</reference>
<proteinExistence type="inferred from homology"/>
<name>LON4_SORC5</name>
<evidence type="ECO:0000255" key="1">
    <source>
        <dbReference type="HAMAP-Rule" id="MF_01973"/>
    </source>
</evidence>
<evidence type="ECO:0000255" key="2">
    <source>
        <dbReference type="PROSITE-ProRule" id="PRU01122"/>
    </source>
</evidence>
<evidence type="ECO:0000255" key="3">
    <source>
        <dbReference type="PROSITE-ProRule" id="PRU01123"/>
    </source>
</evidence>
<comment type="function">
    <text evidence="1">ATP-dependent serine protease that mediates the selective degradation of mutant and abnormal proteins as well as certain short-lived regulatory proteins. Required for cellular homeostasis and for survival from DNA damage and developmental changes induced by stress. Degrades polypeptides processively to yield small peptide fragments that are 5 to 10 amino acids long. Binds to DNA in a double-stranded, site-specific manner.</text>
</comment>
<comment type="catalytic activity">
    <reaction evidence="1">
        <text>Hydrolysis of proteins in presence of ATP.</text>
        <dbReference type="EC" id="3.4.21.53"/>
    </reaction>
</comment>
<comment type="subunit">
    <text evidence="1">Homohexamer. Organized in a ring with a central cavity.</text>
</comment>
<comment type="subcellular location">
    <subcellularLocation>
        <location evidence="1">Cytoplasm</location>
    </subcellularLocation>
</comment>
<comment type="induction">
    <text evidence="1">By heat shock.</text>
</comment>
<comment type="similarity">
    <text evidence="1">Belongs to the peptidase S16 family.</text>
</comment>
<feature type="chain" id="PRO_0000396600" description="Lon protease 4">
    <location>
        <begin position="1"/>
        <end position="799"/>
    </location>
</feature>
<feature type="domain" description="Lon N-terminal" evidence="3">
    <location>
        <begin position="15"/>
        <end position="204"/>
    </location>
</feature>
<feature type="domain" description="Lon proteolytic" evidence="2">
    <location>
        <begin position="595"/>
        <end position="776"/>
    </location>
</feature>
<feature type="active site" evidence="1">
    <location>
        <position position="682"/>
    </location>
</feature>
<feature type="active site" evidence="1">
    <location>
        <position position="725"/>
    </location>
</feature>
<feature type="binding site" evidence="1">
    <location>
        <begin position="356"/>
        <end position="363"/>
    </location>
    <ligand>
        <name>ATP</name>
        <dbReference type="ChEBI" id="CHEBI:30616"/>
    </ligand>
</feature>
<protein>
    <recommendedName>
        <fullName evidence="1">Lon protease 4</fullName>
        <ecNumber evidence="1">3.4.21.53</ecNumber>
    </recommendedName>
    <alternativeName>
        <fullName evidence="1">ATP-dependent protease La 4</fullName>
    </alternativeName>
</protein>
<gene>
    <name evidence="1" type="primary">lon4</name>
    <name type="ordered locus">sce4504</name>
</gene>
<keyword id="KW-0067">ATP-binding</keyword>
<keyword id="KW-0963">Cytoplasm</keyword>
<keyword id="KW-0378">Hydrolase</keyword>
<keyword id="KW-0547">Nucleotide-binding</keyword>
<keyword id="KW-0645">Protease</keyword>
<keyword id="KW-1185">Reference proteome</keyword>
<keyword id="KW-0720">Serine protease</keyword>
<keyword id="KW-0346">Stress response</keyword>
<accession>A9F8L0</accession>